<sequence>MRPQIMPFYIEMGKGDGGITGEDILQNWMLKSNLKNVEILEELPLRPTKLVVAISEEIYPDVYTIEDFKEKVGDREVFIASEFPEIARKYAEKHGLNAIVFDPIGKTEAALLPPMPEADLIIEITEFGTTLKENMCRIIDLVMDKVHSVFIVNKESLKDEEKKQVMENLVTDLKEVIESRNLVSFYFNVPNEDDLRRIIDYLTENGFDPTISPLAKGGAAVHIIVDRSRVKFLKPIIRGMGAKRIATSPVITSGTNRAAQQKPFYLLSGIQREFPSASPFF</sequence>
<evidence type="ECO:0000250" key="1"/>
<evidence type="ECO:0000305" key="2"/>
<feature type="chain" id="PRO_0000151878" description="ATP phosphoribosyltransferase">
    <location>
        <begin position="1"/>
        <end position="281"/>
    </location>
</feature>
<keyword id="KW-0028">Amino-acid biosynthesis</keyword>
<keyword id="KW-0067">ATP-binding</keyword>
<keyword id="KW-0963">Cytoplasm</keyword>
<keyword id="KW-0328">Glycosyltransferase</keyword>
<keyword id="KW-0368">Histidine biosynthesis</keyword>
<keyword id="KW-0460">Magnesium</keyword>
<keyword id="KW-0479">Metal-binding</keyword>
<keyword id="KW-0547">Nucleotide-binding</keyword>
<keyword id="KW-1185">Reference proteome</keyword>
<keyword id="KW-0808">Transferase</keyword>
<reference key="1">
    <citation type="journal article" date="1997" name="Nature">
        <title>The complete genome sequence of the hyperthermophilic, sulphate-reducing archaeon Archaeoglobus fulgidus.</title>
        <authorList>
            <person name="Klenk H.-P."/>
            <person name="Clayton R.A."/>
            <person name="Tomb J.-F."/>
            <person name="White O."/>
            <person name="Nelson K.E."/>
            <person name="Ketchum K.A."/>
            <person name="Dodson R.J."/>
            <person name="Gwinn M.L."/>
            <person name="Hickey E.K."/>
            <person name="Peterson J.D."/>
            <person name="Richardson D.L."/>
            <person name="Kerlavage A.R."/>
            <person name="Graham D.E."/>
            <person name="Kyrpides N.C."/>
            <person name="Fleischmann R.D."/>
            <person name="Quackenbush J."/>
            <person name="Lee N.H."/>
            <person name="Sutton G.G."/>
            <person name="Gill S.R."/>
            <person name="Kirkness E.F."/>
            <person name="Dougherty B.A."/>
            <person name="McKenney K."/>
            <person name="Adams M.D."/>
            <person name="Loftus B.J."/>
            <person name="Peterson S.N."/>
            <person name="Reich C.I."/>
            <person name="McNeil L.K."/>
            <person name="Badger J.H."/>
            <person name="Glodek A."/>
            <person name="Zhou L."/>
            <person name="Overbeek R."/>
            <person name="Gocayne J.D."/>
            <person name="Weidman J.F."/>
            <person name="McDonald L.A."/>
            <person name="Utterback T.R."/>
            <person name="Cotton M.D."/>
            <person name="Spriggs T."/>
            <person name="Artiach P."/>
            <person name="Kaine B.P."/>
            <person name="Sykes S.M."/>
            <person name="Sadow P.W."/>
            <person name="D'Andrea K.P."/>
            <person name="Bowman C."/>
            <person name="Fujii C."/>
            <person name="Garland S.A."/>
            <person name="Mason T.M."/>
            <person name="Olsen G.J."/>
            <person name="Fraser C.M."/>
            <person name="Smith H.O."/>
            <person name="Woese C.R."/>
            <person name="Venter J.C."/>
        </authorList>
    </citation>
    <scope>NUCLEOTIDE SEQUENCE [LARGE SCALE GENOMIC DNA]</scope>
    <source>
        <strain>ATCC 49558 / DSM 4304 / JCM 9628 / NBRC 100126 / VC-16</strain>
    </source>
</reference>
<name>HIS1_ARCFU</name>
<gene>
    <name type="primary">hisG</name>
    <name type="ordered locus">AF_0590</name>
</gene>
<dbReference type="EC" id="2.4.2.17"/>
<dbReference type="EMBL" id="AE000782">
    <property type="protein sequence ID" value="AAB90650.1"/>
    <property type="molecule type" value="Genomic_DNA"/>
</dbReference>
<dbReference type="PIR" id="F69323">
    <property type="entry name" value="F69323"/>
</dbReference>
<dbReference type="SMR" id="O29665"/>
<dbReference type="STRING" id="224325.AF_0590"/>
<dbReference type="PaxDb" id="224325-AF_0590"/>
<dbReference type="EnsemblBacteria" id="AAB90650">
    <property type="protein sequence ID" value="AAB90650"/>
    <property type="gene ID" value="AF_0590"/>
</dbReference>
<dbReference type="KEGG" id="afu:AF_0590"/>
<dbReference type="eggNOG" id="arCOG02208">
    <property type="taxonomic scope" value="Archaea"/>
</dbReference>
<dbReference type="HOGENOM" id="CLU_038115_1_1_2"/>
<dbReference type="PhylomeDB" id="O29665"/>
<dbReference type="UniPathway" id="UPA00031">
    <property type="reaction ID" value="UER00006"/>
</dbReference>
<dbReference type="Proteomes" id="UP000002199">
    <property type="component" value="Chromosome"/>
</dbReference>
<dbReference type="GO" id="GO:0005737">
    <property type="term" value="C:cytoplasm"/>
    <property type="evidence" value="ECO:0007669"/>
    <property type="project" value="UniProtKB-SubCell"/>
</dbReference>
<dbReference type="GO" id="GO:0005524">
    <property type="term" value="F:ATP binding"/>
    <property type="evidence" value="ECO:0007669"/>
    <property type="project" value="UniProtKB-KW"/>
</dbReference>
<dbReference type="GO" id="GO:0003879">
    <property type="term" value="F:ATP phosphoribosyltransferase activity"/>
    <property type="evidence" value="ECO:0007669"/>
    <property type="project" value="UniProtKB-EC"/>
</dbReference>
<dbReference type="GO" id="GO:0000287">
    <property type="term" value="F:magnesium ion binding"/>
    <property type="evidence" value="ECO:0007669"/>
    <property type="project" value="InterPro"/>
</dbReference>
<dbReference type="GO" id="GO:0000105">
    <property type="term" value="P:L-histidine biosynthetic process"/>
    <property type="evidence" value="ECO:0007669"/>
    <property type="project" value="UniProtKB-UniPathway"/>
</dbReference>
<dbReference type="Gene3D" id="3.40.190.10">
    <property type="entry name" value="Periplasmic binding protein-like II"/>
    <property type="match status" value="1"/>
</dbReference>
<dbReference type="InterPro" id="IPR013820">
    <property type="entry name" value="ATP_PRibTrfase_cat"/>
</dbReference>
<dbReference type="InterPro" id="IPR001348">
    <property type="entry name" value="ATP_PRibTrfase_HisG"/>
</dbReference>
<dbReference type="InterPro" id="IPR013115">
    <property type="entry name" value="HisG_C"/>
</dbReference>
<dbReference type="NCBIfam" id="TIGR00070">
    <property type="entry name" value="hisG"/>
    <property type="match status" value="1"/>
</dbReference>
<dbReference type="NCBIfam" id="TIGR03455">
    <property type="entry name" value="HisG_C-term"/>
    <property type="match status" value="1"/>
</dbReference>
<dbReference type="PANTHER" id="PTHR21403:SF10">
    <property type="entry name" value="ATP PHOSPHORIBOSYLTRANSFERASE"/>
    <property type="match status" value="1"/>
</dbReference>
<dbReference type="PANTHER" id="PTHR21403">
    <property type="entry name" value="ATP PHOSPHORIBOSYLTRANSFERASE ATP-PRTASE"/>
    <property type="match status" value="1"/>
</dbReference>
<dbReference type="Pfam" id="PF01634">
    <property type="entry name" value="HisG"/>
    <property type="match status" value="1"/>
</dbReference>
<dbReference type="SUPFAM" id="SSF53850">
    <property type="entry name" value="Periplasmic binding protein-like II"/>
    <property type="match status" value="1"/>
</dbReference>
<comment type="function">
    <text evidence="1">Catalyzes the condensation of ATP and 5-phosphoribose 1-diphosphate to form N'-(5'-phosphoribosyl)-ATP (PR-ATP). Has a crucial role in the pathway because the rate of histidine biosynthesis seems to be controlled primarily by regulation of HisG enzymatic activity (By similarity).</text>
</comment>
<comment type="catalytic activity">
    <reaction>
        <text>1-(5-phospho-beta-D-ribosyl)-ATP + diphosphate = 5-phospho-alpha-D-ribose 1-diphosphate + ATP</text>
        <dbReference type="Rhea" id="RHEA:18473"/>
        <dbReference type="ChEBI" id="CHEBI:30616"/>
        <dbReference type="ChEBI" id="CHEBI:33019"/>
        <dbReference type="ChEBI" id="CHEBI:58017"/>
        <dbReference type="ChEBI" id="CHEBI:73183"/>
        <dbReference type="EC" id="2.4.2.17"/>
    </reaction>
</comment>
<comment type="cofactor">
    <cofactor evidence="1">
        <name>Mg(2+)</name>
        <dbReference type="ChEBI" id="CHEBI:18420"/>
    </cofactor>
</comment>
<comment type="activity regulation">
    <text evidence="1">Feedback inhibited by histidine.</text>
</comment>
<comment type="pathway">
    <text>Amino-acid biosynthesis; L-histidine biosynthesis; L-histidine from 5-phospho-alpha-D-ribose 1-diphosphate: step 1/9.</text>
</comment>
<comment type="subcellular location">
    <subcellularLocation>
        <location evidence="1">Cytoplasm</location>
    </subcellularLocation>
</comment>
<comment type="similarity">
    <text evidence="2">Belongs to the ATP phosphoribosyltransferase family. Long subfamily.</text>
</comment>
<proteinExistence type="inferred from homology"/>
<protein>
    <recommendedName>
        <fullName>ATP phosphoribosyltransferase</fullName>
        <shortName>ATP-PRT</shortName>
        <shortName>ATP-PRTase</shortName>
        <ecNumber>2.4.2.17</ecNumber>
    </recommendedName>
</protein>
<organism>
    <name type="scientific">Archaeoglobus fulgidus (strain ATCC 49558 / DSM 4304 / JCM 9628 / NBRC 100126 / VC-16)</name>
    <dbReference type="NCBI Taxonomy" id="224325"/>
    <lineage>
        <taxon>Archaea</taxon>
        <taxon>Methanobacteriati</taxon>
        <taxon>Methanobacteriota</taxon>
        <taxon>Archaeoglobi</taxon>
        <taxon>Archaeoglobales</taxon>
        <taxon>Archaeoglobaceae</taxon>
        <taxon>Archaeoglobus</taxon>
    </lineage>
</organism>
<accession>O29665</accession>